<proteinExistence type="inferred from homology"/>
<organism>
    <name type="scientific">Haemophilus influenzae (strain 86-028NP)</name>
    <dbReference type="NCBI Taxonomy" id="281310"/>
    <lineage>
        <taxon>Bacteria</taxon>
        <taxon>Pseudomonadati</taxon>
        <taxon>Pseudomonadota</taxon>
        <taxon>Gammaproteobacteria</taxon>
        <taxon>Pasteurellales</taxon>
        <taxon>Pasteurellaceae</taxon>
        <taxon>Haemophilus</taxon>
    </lineage>
</organism>
<keyword id="KW-0687">Ribonucleoprotein</keyword>
<keyword id="KW-0689">Ribosomal protein</keyword>
<keyword id="KW-0694">RNA-binding</keyword>
<keyword id="KW-0699">rRNA-binding</keyword>
<accession>Q4QM99</accession>
<gene>
    <name evidence="1" type="primary">rpsK</name>
    <name type="ordered locus">NTHI0963</name>
</gene>
<feature type="chain" id="PRO_0000230405" description="Small ribosomal subunit protein uS11">
    <location>
        <begin position="1"/>
        <end position="129"/>
    </location>
</feature>
<dbReference type="EMBL" id="CP000057">
    <property type="protein sequence ID" value="AAX87848.1"/>
    <property type="molecule type" value="Genomic_DNA"/>
</dbReference>
<dbReference type="RefSeq" id="WP_005543603.1">
    <property type="nucleotide sequence ID" value="NC_007146.2"/>
</dbReference>
<dbReference type="SMR" id="Q4QM99"/>
<dbReference type="GeneID" id="93298812"/>
<dbReference type="KEGG" id="hit:NTHI0963"/>
<dbReference type="HOGENOM" id="CLU_072439_5_0_6"/>
<dbReference type="Proteomes" id="UP000002525">
    <property type="component" value="Chromosome"/>
</dbReference>
<dbReference type="GO" id="GO:1990904">
    <property type="term" value="C:ribonucleoprotein complex"/>
    <property type="evidence" value="ECO:0007669"/>
    <property type="project" value="UniProtKB-KW"/>
</dbReference>
<dbReference type="GO" id="GO:0005840">
    <property type="term" value="C:ribosome"/>
    <property type="evidence" value="ECO:0007669"/>
    <property type="project" value="UniProtKB-KW"/>
</dbReference>
<dbReference type="GO" id="GO:0019843">
    <property type="term" value="F:rRNA binding"/>
    <property type="evidence" value="ECO:0007669"/>
    <property type="project" value="UniProtKB-UniRule"/>
</dbReference>
<dbReference type="GO" id="GO:0003735">
    <property type="term" value="F:structural constituent of ribosome"/>
    <property type="evidence" value="ECO:0007669"/>
    <property type="project" value="InterPro"/>
</dbReference>
<dbReference type="GO" id="GO:0006412">
    <property type="term" value="P:translation"/>
    <property type="evidence" value="ECO:0007669"/>
    <property type="project" value="UniProtKB-UniRule"/>
</dbReference>
<dbReference type="FunFam" id="3.30.420.80:FF:000001">
    <property type="entry name" value="30S ribosomal protein S11"/>
    <property type="match status" value="1"/>
</dbReference>
<dbReference type="Gene3D" id="3.30.420.80">
    <property type="entry name" value="Ribosomal protein S11"/>
    <property type="match status" value="1"/>
</dbReference>
<dbReference type="HAMAP" id="MF_01310">
    <property type="entry name" value="Ribosomal_uS11"/>
    <property type="match status" value="1"/>
</dbReference>
<dbReference type="InterPro" id="IPR001971">
    <property type="entry name" value="Ribosomal_uS11"/>
</dbReference>
<dbReference type="InterPro" id="IPR019981">
    <property type="entry name" value="Ribosomal_uS11_bac-type"/>
</dbReference>
<dbReference type="InterPro" id="IPR018102">
    <property type="entry name" value="Ribosomal_uS11_CS"/>
</dbReference>
<dbReference type="InterPro" id="IPR036967">
    <property type="entry name" value="Ribosomal_uS11_sf"/>
</dbReference>
<dbReference type="NCBIfam" id="NF003698">
    <property type="entry name" value="PRK05309.1"/>
    <property type="match status" value="1"/>
</dbReference>
<dbReference type="NCBIfam" id="TIGR03632">
    <property type="entry name" value="uS11_bact"/>
    <property type="match status" value="1"/>
</dbReference>
<dbReference type="PANTHER" id="PTHR11759">
    <property type="entry name" value="40S RIBOSOMAL PROTEIN S14/30S RIBOSOMAL PROTEIN S11"/>
    <property type="match status" value="1"/>
</dbReference>
<dbReference type="Pfam" id="PF00411">
    <property type="entry name" value="Ribosomal_S11"/>
    <property type="match status" value="1"/>
</dbReference>
<dbReference type="PIRSF" id="PIRSF002131">
    <property type="entry name" value="Ribosomal_S11"/>
    <property type="match status" value="1"/>
</dbReference>
<dbReference type="SUPFAM" id="SSF53137">
    <property type="entry name" value="Translational machinery components"/>
    <property type="match status" value="1"/>
</dbReference>
<dbReference type="PROSITE" id="PS00054">
    <property type="entry name" value="RIBOSOMAL_S11"/>
    <property type="match status" value="1"/>
</dbReference>
<evidence type="ECO:0000255" key="1">
    <source>
        <dbReference type="HAMAP-Rule" id="MF_01310"/>
    </source>
</evidence>
<evidence type="ECO:0000305" key="2"/>
<protein>
    <recommendedName>
        <fullName evidence="1">Small ribosomal subunit protein uS11</fullName>
    </recommendedName>
    <alternativeName>
        <fullName evidence="2">30S ribosomal protein S11</fullName>
    </alternativeName>
</protein>
<name>RS11_HAEI8</name>
<reference key="1">
    <citation type="journal article" date="2005" name="J. Bacteriol.">
        <title>Genomic sequence of an otitis media isolate of nontypeable Haemophilus influenzae: comparative study with H. influenzae serotype d, strain KW20.</title>
        <authorList>
            <person name="Harrison A."/>
            <person name="Dyer D.W."/>
            <person name="Gillaspy A."/>
            <person name="Ray W.C."/>
            <person name="Mungur R."/>
            <person name="Carson M.B."/>
            <person name="Zhong H."/>
            <person name="Gipson J."/>
            <person name="Gipson M."/>
            <person name="Johnson L.S."/>
            <person name="Lewis L."/>
            <person name="Bakaletz L.O."/>
            <person name="Munson R.S. Jr."/>
        </authorList>
    </citation>
    <scope>NUCLEOTIDE SEQUENCE [LARGE SCALE GENOMIC DNA]</scope>
    <source>
        <strain>86-028NP</strain>
    </source>
</reference>
<sequence>MAKTPVRARKRVKKQVVDGVAHIHASFNNTIVTITDRQGNALAWATAGGSGFRGSRKSTPFAAQVAAERCAEIVKEFGLKNLEVMVKGPGPGRESTIRALNAAGFRITNITDVTPIPHNGCRPPKKRRV</sequence>
<comment type="function">
    <text evidence="1">Located on the platform of the 30S subunit, it bridges several disparate RNA helices of the 16S rRNA. Forms part of the Shine-Dalgarno cleft in the 70S ribosome.</text>
</comment>
<comment type="subunit">
    <text evidence="1">Part of the 30S ribosomal subunit. Interacts with proteins S7 and S18. Binds to IF-3.</text>
</comment>
<comment type="similarity">
    <text evidence="1">Belongs to the universal ribosomal protein uS11 family.</text>
</comment>